<sequence length="335" mass="37952">MAAGWWFWCVSVTVAVALLIVCDVPSVSAQRKKEMVLSEKVCQLMEWTNKRPVIRMNGDKFRRLVKAPPRNYSVIVMFTALQLHRQCVVCKQADEEFQILANSWRYSSAFTNRIFFAMVDFDEGSDVFQMLNMNSAPTFINFPAKGKPKRGDTYELQVRGFSAEQIARWIADRTDVNIRVIRPPNYAGPLMLGLLLAVIGGLVYLRRSNMEFLFNKTGWAFAALCFVLAMTSGQMWNHIRGPPYAHKNPHTGHVNYIHGSSQAQFVAETHIVLLFNGGVTLGMVLLCEAATSDMDIGKRKIMCVAGIGLVVLFFSWMLSIFRSKYHGYPYSFLMS</sequence>
<proteinExistence type="evidence at transcript level"/>
<evidence type="ECO:0000250" key="1"/>
<evidence type="ECO:0000250" key="2">
    <source>
        <dbReference type="UniProtKB" id="Q9CQY5"/>
    </source>
</evidence>
<evidence type="ECO:0000250" key="3">
    <source>
        <dbReference type="UniProtKB" id="Q9H0U3"/>
    </source>
</evidence>
<evidence type="ECO:0000255" key="4"/>
<evidence type="ECO:0000303" key="5">
    <source ref="1"/>
</evidence>
<evidence type="ECO:0000305" key="6"/>
<dbReference type="EMBL" id="CR857566">
    <property type="protein sequence ID" value="CAH89844.1"/>
    <property type="molecule type" value="mRNA"/>
</dbReference>
<dbReference type="EMBL" id="CR857707">
    <property type="protein sequence ID" value="CAH89976.1"/>
    <property type="molecule type" value="mRNA"/>
</dbReference>
<dbReference type="RefSeq" id="NP_001124931.1">
    <property type="nucleotide sequence ID" value="NM_001131459.2"/>
</dbReference>
<dbReference type="RefSeq" id="NP_001128755.1">
    <property type="nucleotide sequence ID" value="NM_001135283.1"/>
</dbReference>
<dbReference type="SMR" id="Q5RE31"/>
<dbReference type="FunCoup" id="Q5RE31">
    <property type="interactions" value="1262"/>
</dbReference>
<dbReference type="STRING" id="9601.ENSPPYP00000022939"/>
<dbReference type="GlyCosmos" id="Q5RE31">
    <property type="glycosylation" value="1 site, No reported glycans"/>
</dbReference>
<dbReference type="GeneID" id="100171802"/>
<dbReference type="KEGG" id="pon:100171802"/>
<dbReference type="CTD" id="84061"/>
<dbReference type="eggNOG" id="KOG2603">
    <property type="taxonomic scope" value="Eukaryota"/>
</dbReference>
<dbReference type="InParanoid" id="Q5RE31"/>
<dbReference type="OrthoDB" id="67566at2759"/>
<dbReference type="UniPathway" id="UPA00378"/>
<dbReference type="Proteomes" id="UP000001595">
    <property type="component" value="Unplaced"/>
</dbReference>
<dbReference type="GO" id="GO:0008250">
    <property type="term" value="C:oligosaccharyltransferase complex"/>
    <property type="evidence" value="ECO:0007669"/>
    <property type="project" value="TreeGrafter"/>
</dbReference>
<dbReference type="GO" id="GO:0005886">
    <property type="term" value="C:plasma membrane"/>
    <property type="evidence" value="ECO:0007669"/>
    <property type="project" value="UniProtKB-SubCell"/>
</dbReference>
<dbReference type="GO" id="GO:0018279">
    <property type="term" value="P:protein N-linked glycosylation via asparagine"/>
    <property type="evidence" value="ECO:0007669"/>
    <property type="project" value="TreeGrafter"/>
</dbReference>
<dbReference type="CDD" id="cd02947">
    <property type="entry name" value="TRX_family"/>
    <property type="match status" value="1"/>
</dbReference>
<dbReference type="FunFam" id="3.40.30.10:FF:000009">
    <property type="entry name" value="Tumor suppressor candidate 3"/>
    <property type="match status" value="1"/>
</dbReference>
<dbReference type="Gene3D" id="3.40.30.10">
    <property type="entry name" value="Glutaredoxin"/>
    <property type="match status" value="1"/>
</dbReference>
<dbReference type="InterPro" id="IPR021149">
    <property type="entry name" value="OligosaccharylTrfase_OST3/OST6"/>
</dbReference>
<dbReference type="InterPro" id="IPR036249">
    <property type="entry name" value="Thioredoxin-like_sf"/>
</dbReference>
<dbReference type="PANTHER" id="PTHR12692">
    <property type="entry name" value="DOLICHYL-DIPHOSPHOOLIGOSACCHARIDE--PROTEIN GLYCOSYLTRANSFERASE-RELATED"/>
    <property type="match status" value="1"/>
</dbReference>
<dbReference type="PANTHER" id="PTHR12692:SF2">
    <property type="entry name" value="MAGNESIUM TRANSPORTER PROTEIN 1"/>
    <property type="match status" value="1"/>
</dbReference>
<dbReference type="Pfam" id="PF04756">
    <property type="entry name" value="OST3_OST6"/>
    <property type="match status" value="1"/>
</dbReference>
<dbReference type="SUPFAM" id="SSF52833">
    <property type="entry name" value="Thioredoxin-like"/>
    <property type="match status" value="1"/>
</dbReference>
<name>MAGT1_PONAB</name>
<organism>
    <name type="scientific">Pongo abelii</name>
    <name type="common">Sumatran orangutan</name>
    <name type="synonym">Pongo pygmaeus abelii</name>
    <dbReference type="NCBI Taxonomy" id="9601"/>
    <lineage>
        <taxon>Eukaryota</taxon>
        <taxon>Metazoa</taxon>
        <taxon>Chordata</taxon>
        <taxon>Craniata</taxon>
        <taxon>Vertebrata</taxon>
        <taxon>Euteleostomi</taxon>
        <taxon>Mammalia</taxon>
        <taxon>Eutheria</taxon>
        <taxon>Euarchontoglires</taxon>
        <taxon>Primates</taxon>
        <taxon>Haplorrhini</taxon>
        <taxon>Catarrhini</taxon>
        <taxon>Hominidae</taxon>
        <taxon>Pongo</taxon>
    </lineage>
</organism>
<gene>
    <name evidence="3" type="primary">MAGT1</name>
    <name type="synonym">IAG2</name>
</gene>
<feature type="signal peptide" evidence="4">
    <location>
        <begin position="1"/>
        <end position="29"/>
    </location>
</feature>
<feature type="chain" id="PRO_0000246059" description="Dolichyl-diphosphooligosaccharide--protein glycosyltransferase subunit MAGT1">
    <location>
        <begin position="30"/>
        <end position="335"/>
    </location>
</feature>
<feature type="topological domain" description="Extracellular" evidence="4">
    <location>
        <begin position="30"/>
        <end position="184"/>
    </location>
</feature>
<feature type="transmembrane region" description="Helical" evidence="4">
    <location>
        <begin position="185"/>
        <end position="205"/>
    </location>
</feature>
<feature type="topological domain" description="Cytoplasmic" evidence="4">
    <location>
        <begin position="206"/>
        <end position="209"/>
    </location>
</feature>
<feature type="transmembrane region" description="Helical" evidence="4">
    <location>
        <begin position="210"/>
        <end position="230"/>
    </location>
</feature>
<feature type="topological domain" description="Extracellular" evidence="4">
    <location>
        <begin position="231"/>
        <end position="270"/>
    </location>
</feature>
<feature type="transmembrane region" description="Helical" evidence="4">
    <location>
        <begin position="271"/>
        <end position="291"/>
    </location>
</feature>
<feature type="topological domain" description="Cytoplasmic" evidence="4">
    <location>
        <begin position="292"/>
        <end position="300"/>
    </location>
</feature>
<feature type="transmembrane region" description="Helical" evidence="4">
    <location>
        <begin position="301"/>
        <end position="321"/>
    </location>
</feature>
<feature type="topological domain" description="Extracellular" evidence="4">
    <location>
        <begin position="322"/>
        <end position="335"/>
    </location>
</feature>
<feature type="domain" description="Thioredoxin">
    <location>
        <begin position="47"/>
        <end position="175"/>
    </location>
</feature>
<feature type="glycosylation site" description="N-linked (GlcNAc...) asparagine" evidence="4">
    <location>
        <position position="71"/>
    </location>
</feature>
<feature type="disulfide bond" description="Redox-active" evidence="1">
    <location>
        <begin position="87"/>
        <end position="90"/>
    </location>
</feature>
<feature type="splice variant" id="VSP_019824" description="In isoform 2." evidence="5">
    <location>
        <begin position="1"/>
        <end position="34"/>
    </location>
</feature>
<feature type="sequence conflict" description="In Ref. 1; CAH89844." evidence="6" ref="1">
    <original>C</original>
    <variation>S</variation>
    <location>
        <position position="42"/>
    </location>
</feature>
<feature type="sequence conflict" description="In Ref. 1; CAH89844." evidence="6" ref="1">
    <original>S</original>
    <variation>C</variation>
    <location>
        <position position="108"/>
    </location>
</feature>
<feature type="sequence conflict" description="In Ref. 1; CAH89844." evidence="6" ref="1">
    <original>C</original>
    <variation>G</variation>
    <location>
        <position position="303"/>
    </location>
</feature>
<comment type="function">
    <text evidence="2 3">Accessory component of the STT3B-containing form of the N-oligosaccharyl transferase (OST) complex which catalyzes the transfer of a high mannose oligosaccharide from a lipid-linked oligosaccharide donor to an asparagine residue within an Asn-X-Ser/Thr consensus motif in nascent polypeptide chains. Involved in N-glycosylation of STT3B-dependent substrates. Specifically required for the glycosylation of a subset of acceptor sites that are near cysteine residues; in this function seems to act redundantly with TUSC3. In its oxidized form proposed to form transient mixed disulfides with a glycoprotein substrate to facilitate access of STT3B to the unmodified acceptor site. Also has oxidoreductase-independent functions in the STT3B-containing OST complex possibly involving substrate recognition. Could indirectly play a role in Mg(2+) transport in epithelial cells.</text>
</comment>
<comment type="pathway">
    <text evidence="3">Protein modification; protein glycosylation.</text>
</comment>
<comment type="subunit">
    <text evidence="3">Accessory component of the STT3B-containing form of the oligosaccharyltransferase (OST) complex. OST exists in two different complex forms which contain common core subunits RPN1, RPN2, OST48, OST4, DAD1 and TMEM258, either STT3A or STT3B as catalytic subunits, and form-specific accessory subunits. OST can form stable complexes with the Sec61 complex or with both the Sec61 and TRAP complexes. The association of TUSC3 or MAGT1 with the STT3B-containing complex seems to be mutually exclusvice.</text>
</comment>
<comment type="subcellular location">
    <subcellularLocation>
        <location evidence="3">Cell membrane</location>
        <topology evidence="3">Multi-pass membrane protein</topology>
    </subcellularLocation>
    <subcellularLocation>
        <location evidence="3">Endoplasmic reticulum</location>
    </subcellularLocation>
    <subcellularLocation>
        <location evidence="1">Endoplasmic reticulum membrane</location>
        <topology evidence="1">Multi-pass membrane protein</topology>
    </subcellularLocation>
</comment>
<comment type="alternative products">
    <event type="alternative splicing"/>
    <isoform>
        <id>Q5RE31-1</id>
        <name>1</name>
        <sequence type="displayed"/>
    </isoform>
    <isoform>
        <id>Q5RE31-2</id>
        <name>2</name>
        <sequence type="described" ref="VSP_019824"/>
    </isoform>
</comment>
<comment type="similarity">
    <text evidence="6">Belongs to the OST3/OST6 family.</text>
</comment>
<keyword id="KW-0025">Alternative splicing</keyword>
<keyword id="KW-1003">Cell membrane</keyword>
<keyword id="KW-1015">Disulfide bond</keyword>
<keyword id="KW-0256">Endoplasmic reticulum</keyword>
<keyword id="KW-0325">Glycoprotein</keyword>
<keyword id="KW-0460">Magnesium</keyword>
<keyword id="KW-0472">Membrane</keyword>
<keyword id="KW-1185">Reference proteome</keyword>
<keyword id="KW-0732">Signal</keyword>
<keyword id="KW-0812">Transmembrane</keyword>
<keyword id="KW-1133">Transmembrane helix</keyword>
<keyword id="KW-0813">Transport</keyword>
<protein>
    <recommendedName>
        <fullName>Dolichyl-diphosphooligosaccharide--protein glycosyltransferase subunit MAGT1</fullName>
        <shortName>Oligosaccharyl transferase subunit MAGT1</shortName>
    </recommendedName>
    <alternativeName>
        <fullName>Implantation-associated protein</fullName>
        <shortName>IAP</shortName>
    </alternativeName>
    <alternativeName>
        <fullName evidence="3">Magnesium transporter protein 1</fullName>
        <shortName>MagT1</shortName>
    </alternativeName>
</protein>
<reference key="1">
    <citation type="submission" date="2004-11" db="EMBL/GenBank/DDBJ databases">
        <authorList>
            <consortium name="The German cDNA consortium"/>
        </authorList>
    </citation>
    <scope>NUCLEOTIDE SEQUENCE [LARGE SCALE MRNA] (ISOFORMS 1 AND 2)</scope>
    <source>
        <tissue>Brain cortex</tissue>
        <tissue>Kidney</tissue>
    </source>
</reference>
<accession>Q5RE31</accession>
<accession>Q5REG3</accession>